<feature type="chain" id="PRO_0000228034" description="Mitochondrial import inner membrane translocase subunit TIM8">
    <location>
        <begin position="1"/>
        <end position="87"/>
    </location>
</feature>
<feature type="short sequence motif" description="Twin CX3C motif">
    <location>
        <begin position="44"/>
        <end position="68"/>
    </location>
</feature>
<feature type="disulfide bond" evidence="1">
    <location>
        <begin position="44"/>
        <end position="68"/>
    </location>
</feature>
<feature type="disulfide bond" evidence="1">
    <location>
        <begin position="48"/>
        <end position="64"/>
    </location>
</feature>
<name>TIM8_KLULA</name>
<protein>
    <recommendedName>
        <fullName>Mitochondrial import inner membrane translocase subunit TIM8</fullName>
    </recommendedName>
</protein>
<organism>
    <name type="scientific">Kluyveromyces lactis (strain ATCC 8585 / CBS 2359 / DSM 70799 / NBRC 1267 / NRRL Y-1140 / WM37)</name>
    <name type="common">Yeast</name>
    <name type="synonym">Candida sphaerica</name>
    <dbReference type="NCBI Taxonomy" id="284590"/>
    <lineage>
        <taxon>Eukaryota</taxon>
        <taxon>Fungi</taxon>
        <taxon>Dikarya</taxon>
        <taxon>Ascomycota</taxon>
        <taxon>Saccharomycotina</taxon>
        <taxon>Saccharomycetes</taxon>
        <taxon>Saccharomycetales</taxon>
        <taxon>Saccharomycetaceae</taxon>
        <taxon>Kluyveromyces</taxon>
    </lineage>
</organism>
<evidence type="ECO:0000250" key="1"/>
<evidence type="ECO:0000305" key="2"/>
<keyword id="KW-0143">Chaperone</keyword>
<keyword id="KW-1015">Disulfide bond</keyword>
<keyword id="KW-0472">Membrane</keyword>
<keyword id="KW-0479">Metal-binding</keyword>
<keyword id="KW-0496">Mitochondrion</keyword>
<keyword id="KW-0999">Mitochondrion inner membrane</keyword>
<keyword id="KW-0653">Protein transport</keyword>
<keyword id="KW-1185">Reference proteome</keyword>
<keyword id="KW-0811">Translocation</keyword>
<keyword id="KW-0813">Transport</keyword>
<keyword id="KW-0862">Zinc</keyword>
<comment type="function">
    <text evidence="1">Mitochondrial intermembrane chaperone that participates in the import and insertion of some multi-pass transmembrane proteins into the mitochondrial inner membrane. Also required for the transfer of beta-barrel precursors from the TOM complex to the sorting and assembly machinery (SAM complex) of the outer membrane. Acts as a chaperone-like protein that protects the hydrophobic precursors from aggregation and guide them through the mitochondrial intermembrane space. The TIM8-TIM13 complex is non essential and only mediates the import of few proteins, while the predominant TIM9-TIM10 70 kDa complex is crucial and mediates the import of much more proteins (By similarity).</text>
</comment>
<comment type="subunit">
    <text evidence="1">Heterohexamer; composed of 3 copies of TIM8 and 3 copies of TIM13, named soluble 70 kDa complex. Associates with the TIM22 complex, whose core is composed of TIM22 and TIM54. Interacts with the transmembrane regions of multi-pass transmembrane proteins in transit (By similarity).</text>
</comment>
<comment type="subcellular location">
    <subcellularLocation>
        <location evidence="1">Mitochondrion inner membrane</location>
        <topology evidence="1">Peripheral membrane protein</topology>
        <orientation evidence="1">Intermembrane side</orientation>
    </subcellularLocation>
</comment>
<comment type="domain">
    <text evidence="1">The twin CX3C motif contains 4 conserved Cys residues that form 2 disulfide bonds in the mitochondrial intermembrane space. However, during the transit of TIM8 from cytoplasm into mitochondrion, the Cys residues probably coordinate zinc, thereby preventing folding and allowing its transfer across mitochondrial outer membrane (By similarity).</text>
</comment>
<comment type="similarity">
    <text evidence="2">Belongs to the small Tim family.</text>
</comment>
<dbReference type="EMBL" id="CR382122">
    <property type="protein sequence ID" value="CAH02107.1"/>
    <property type="molecule type" value="Genomic_DNA"/>
</dbReference>
<dbReference type="RefSeq" id="XP_451714.1">
    <property type="nucleotide sequence ID" value="XM_451714.1"/>
</dbReference>
<dbReference type="SMR" id="Q6CWH5"/>
<dbReference type="FunCoup" id="Q6CWH5">
    <property type="interactions" value="550"/>
</dbReference>
<dbReference type="STRING" id="284590.Q6CWH5"/>
<dbReference type="PaxDb" id="284590-Q6CWH5"/>
<dbReference type="KEGG" id="kla:KLLA0_B04048g"/>
<dbReference type="eggNOG" id="KOG3489">
    <property type="taxonomic scope" value="Eukaryota"/>
</dbReference>
<dbReference type="HOGENOM" id="CLU_141397_1_0_1"/>
<dbReference type="InParanoid" id="Q6CWH5"/>
<dbReference type="OMA" id="NEICWDK"/>
<dbReference type="Proteomes" id="UP000000598">
    <property type="component" value="Chromosome B"/>
</dbReference>
<dbReference type="GO" id="GO:0005743">
    <property type="term" value="C:mitochondrial inner membrane"/>
    <property type="evidence" value="ECO:0007669"/>
    <property type="project" value="UniProtKB-SubCell"/>
</dbReference>
<dbReference type="GO" id="GO:0046872">
    <property type="term" value="F:metal ion binding"/>
    <property type="evidence" value="ECO:0007669"/>
    <property type="project" value="UniProtKB-KW"/>
</dbReference>
<dbReference type="GO" id="GO:0015031">
    <property type="term" value="P:protein transport"/>
    <property type="evidence" value="ECO:0007669"/>
    <property type="project" value="UniProtKB-KW"/>
</dbReference>
<dbReference type="Gene3D" id="1.10.287.810">
    <property type="entry name" value="Mitochondrial import inner membrane translocase subunit tim13 like domains"/>
    <property type="match status" value="1"/>
</dbReference>
<dbReference type="InterPro" id="IPR004217">
    <property type="entry name" value="Tim10-like"/>
</dbReference>
<dbReference type="InterPro" id="IPR035427">
    <property type="entry name" value="Tim10-like_dom_sf"/>
</dbReference>
<dbReference type="Pfam" id="PF02953">
    <property type="entry name" value="zf-Tim10_DDP"/>
    <property type="match status" value="1"/>
</dbReference>
<dbReference type="SUPFAM" id="SSF144122">
    <property type="entry name" value="Tim10-like"/>
    <property type="match status" value="1"/>
</dbReference>
<reference key="1">
    <citation type="journal article" date="2004" name="Nature">
        <title>Genome evolution in yeasts.</title>
        <authorList>
            <person name="Dujon B."/>
            <person name="Sherman D."/>
            <person name="Fischer G."/>
            <person name="Durrens P."/>
            <person name="Casaregola S."/>
            <person name="Lafontaine I."/>
            <person name="de Montigny J."/>
            <person name="Marck C."/>
            <person name="Neuveglise C."/>
            <person name="Talla E."/>
            <person name="Goffard N."/>
            <person name="Frangeul L."/>
            <person name="Aigle M."/>
            <person name="Anthouard V."/>
            <person name="Babour A."/>
            <person name="Barbe V."/>
            <person name="Barnay S."/>
            <person name="Blanchin S."/>
            <person name="Beckerich J.-M."/>
            <person name="Beyne E."/>
            <person name="Bleykasten C."/>
            <person name="Boisrame A."/>
            <person name="Boyer J."/>
            <person name="Cattolico L."/>
            <person name="Confanioleri F."/>
            <person name="de Daruvar A."/>
            <person name="Despons L."/>
            <person name="Fabre E."/>
            <person name="Fairhead C."/>
            <person name="Ferry-Dumazet H."/>
            <person name="Groppi A."/>
            <person name="Hantraye F."/>
            <person name="Hennequin C."/>
            <person name="Jauniaux N."/>
            <person name="Joyet P."/>
            <person name="Kachouri R."/>
            <person name="Kerrest A."/>
            <person name="Koszul R."/>
            <person name="Lemaire M."/>
            <person name="Lesur I."/>
            <person name="Ma L."/>
            <person name="Muller H."/>
            <person name="Nicaud J.-M."/>
            <person name="Nikolski M."/>
            <person name="Oztas S."/>
            <person name="Ozier-Kalogeropoulos O."/>
            <person name="Pellenz S."/>
            <person name="Potier S."/>
            <person name="Richard G.-F."/>
            <person name="Straub M.-L."/>
            <person name="Suleau A."/>
            <person name="Swennen D."/>
            <person name="Tekaia F."/>
            <person name="Wesolowski-Louvel M."/>
            <person name="Westhof E."/>
            <person name="Wirth B."/>
            <person name="Zeniou-Meyer M."/>
            <person name="Zivanovic Y."/>
            <person name="Bolotin-Fukuhara M."/>
            <person name="Thierry A."/>
            <person name="Bouchier C."/>
            <person name="Caudron B."/>
            <person name="Scarpelli C."/>
            <person name="Gaillardin C."/>
            <person name="Weissenbach J."/>
            <person name="Wincker P."/>
            <person name="Souciet J.-L."/>
        </authorList>
    </citation>
    <scope>NUCLEOTIDE SEQUENCE [LARGE SCALE GENOMIC DNA]</scope>
    <source>
        <strain>ATCC 8585 / CBS 2359 / DSM 70799 / NBRC 1267 / NRRL Y-1140 / WM37</strain>
    </source>
</reference>
<gene>
    <name type="primary">TIM8</name>
    <name type="ordered locus">KLLA0B04048g</name>
</gene>
<accession>Q6CWH5</accession>
<proteinExistence type="inferred from homology"/>
<sequence length="87" mass="9888">MSSISQNDLSNLDDGSKKEIMTFLESENSKQKVQMSIHQFTNLCFKNCISNVQNADLSSQEEQCLNNCVNRFLDTNIRIVKGLQSIQ</sequence>